<name>AATB_METTH</name>
<protein>
    <recommendedName>
        <fullName evidence="1">A-type ATP synthase subunit B</fullName>
    </recommendedName>
</protein>
<reference key="1">
    <citation type="journal article" date="1997" name="J. Bacteriol.">
        <title>Complete genome sequence of Methanobacterium thermoautotrophicum deltaH: functional analysis and comparative genomics.</title>
        <authorList>
            <person name="Smith D.R."/>
            <person name="Doucette-Stamm L.A."/>
            <person name="Deloughery C."/>
            <person name="Lee H.-M."/>
            <person name="Dubois J."/>
            <person name="Aldredge T."/>
            <person name="Bashirzadeh R."/>
            <person name="Blakely D."/>
            <person name="Cook R."/>
            <person name="Gilbert K."/>
            <person name="Harrison D."/>
            <person name="Hoang L."/>
            <person name="Keagle P."/>
            <person name="Lumm W."/>
            <person name="Pothier B."/>
            <person name="Qiu D."/>
            <person name="Spadafora R."/>
            <person name="Vicare R."/>
            <person name="Wang Y."/>
            <person name="Wierzbowski J."/>
            <person name="Gibson R."/>
            <person name="Jiwani N."/>
            <person name="Caruso A."/>
            <person name="Bush D."/>
            <person name="Safer H."/>
            <person name="Patwell D."/>
            <person name="Prabhakar S."/>
            <person name="McDougall S."/>
            <person name="Shimer G."/>
            <person name="Goyal A."/>
            <person name="Pietrovski S."/>
            <person name="Church G.M."/>
            <person name="Daniels C.J."/>
            <person name="Mao J.-I."/>
            <person name="Rice P."/>
            <person name="Noelling J."/>
            <person name="Reeve J.N."/>
        </authorList>
    </citation>
    <scope>NUCLEOTIDE SEQUENCE [LARGE SCALE GENOMIC DNA]</scope>
    <source>
        <strain>ATCC 29096 / DSM 1053 / JCM 10044 / NBRC 100330 / Delta H</strain>
    </source>
</reference>
<gene>
    <name evidence="1" type="primary">atpB</name>
    <name type="ordered locus">MTH_954</name>
</gene>
<accession>O27035</accession>
<evidence type="ECO:0000255" key="1">
    <source>
        <dbReference type="HAMAP-Rule" id="MF_00310"/>
    </source>
</evidence>
<evidence type="ECO:0000305" key="2"/>
<feature type="chain" id="PRO_0000144658" description="A-type ATP synthase subunit B">
    <location>
        <begin position="1"/>
        <end position="463"/>
    </location>
</feature>
<dbReference type="EMBL" id="AE000666">
    <property type="protein sequence ID" value="AAB85450.1"/>
    <property type="status" value="ALT_INIT"/>
    <property type="molecule type" value="Genomic_DNA"/>
</dbReference>
<dbReference type="PIR" id="F69227">
    <property type="entry name" value="F69227"/>
</dbReference>
<dbReference type="RefSeq" id="WP_013296141.1">
    <property type="nucleotide sequence ID" value="NC_000916.1"/>
</dbReference>
<dbReference type="SMR" id="O27035"/>
<dbReference type="FunCoup" id="O27035">
    <property type="interactions" value="40"/>
</dbReference>
<dbReference type="IntAct" id="O27035">
    <property type="interactions" value="1"/>
</dbReference>
<dbReference type="STRING" id="187420.MTH_954"/>
<dbReference type="PaxDb" id="187420-MTH_954"/>
<dbReference type="EnsemblBacteria" id="AAB85450">
    <property type="protein sequence ID" value="AAB85450"/>
    <property type="gene ID" value="MTH_954"/>
</dbReference>
<dbReference type="KEGG" id="mth:MTH_954"/>
<dbReference type="PATRIC" id="fig|187420.15.peg.937"/>
<dbReference type="HOGENOM" id="CLU_022916_0_0_2"/>
<dbReference type="InParanoid" id="O27035"/>
<dbReference type="Proteomes" id="UP000005223">
    <property type="component" value="Chromosome"/>
</dbReference>
<dbReference type="GO" id="GO:0005886">
    <property type="term" value="C:plasma membrane"/>
    <property type="evidence" value="ECO:0007669"/>
    <property type="project" value="UniProtKB-SubCell"/>
</dbReference>
<dbReference type="GO" id="GO:0033178">
    <property type="term" value="C:proton-transporting two-sector ATPase complex, catalytic domain"/>
    <property type="evidence" value="ECO:0007669"/>
    <property type="project" value="InterPro"/>
</dbReference>
<dbReference type="GO" id="GO:0005524">
    <property type="term" value="F:ATP binding"/>
    <property type="evidence" value="ECO:0007669"/>
    <property type="project" value="UniProtKB-UniRule"/>
</dbReference>
<dbReference type="GO" id="GO:0046933">
    <property type="term" value="F:proton-transporting ATP synthase activity, rotational mechanism"/>
    <property type="evidence" value="ECO:0007669"/>
    <property type="project" value="UniProtKB-UniRule"/>
</dbReference>
<dbReference type="GO" id="GO:0042777">
    <property type="term" value="P:proton motive force-driven plasma membrane ATP synthesis"/>
    <property type="evidence" value="ECO:0007669"/>
    <property type="project" value="UniProtKB-UniRule"/>
</dbReference>
<dbReference type="CDD" id="cd18112">
    <property type="entry name" value="ATP-synt_V_A-type_beta_C"/>
    <property type="match status" value="1"/>
</dbReference>
<dbReference type="CDD" id="cd18118">
    <property type="entry name" value="ATP-synt_V_A-type_beta_N"/>
    <property type="match status" value="1"/>
</dbReference>
<dbReference type="CDD" id="cd01135">
    <property type="entry name" value="V_A-ATPase_B"/>
    <property type="match status" value="1"/>
</dbReference>
<dbReference type="Gene3D" id="3.40.50.12240">
    <property type="match status" value="1"/>
</dbReference>
<dbReference type="HAMAP" id="MF_00310">
    <property type="entry name" value="ATP_synth_B_arch"/>
    <property type="match status" value="1"/>
</dbReference>
<dbReference type="InterPro" id="IPR055190">
    <property type="entry name" value="ATP-synt_VA_C"/>
</dbReference>
<dbReference type="InterPro" id="IPR020003">
    <property type="entry name" value="ATPase_a/bsu_AS"/>
</dbReference>
<dbReference type="InterPro" id="IPR005724">
    <property type="entry name" value="ATPase_A1-cplx_bsu"/>
</dbReference>
<dbReference type="InterPro" id="IPR004100">
    <property type="entry name" value="ATPase_F1/V1/A1_a/bsu_N"/>
</dbReference>
<dbReference type="InterPro" id="IPR036121">
    <property type="entry name" value="ATPase_F1/V1/A1_a/bsu_N_sf"/>
</dbReference>
<dbReference type="InterPro" id="IPR000194">
    <property type="entry name" value="ATPase_F1/V1/A1_a/bsu_nucl-bd"/>
</dbReference>
<dbReference type="InterPro" id="IPR027417">
    <property type="entry name" value="P-loop_NTPase"/>
</dbReference>
<dbReference type="InterPro" id="IPR022879">
    <property type="entry name" value="V-ATPase_su_B/beta"/>
</dbReference>
<dbReference type="NCBIfam" id="TIGR01041">
    <property type="entry name" value="ATP_syn_B_arch"/>
    <property type="match status" value="1"/>
</dbReference>
<dbReference type="NCBIfam" id="NF003235">
    <property type="entry name" value="PRK04196.1"/>
    <property type="match status" value="1"/>
</dbReference>
<dbReference type="PANTHER" id="PTHR43389">
    <property type="entry name" value="V-TYPE PROTON ATPASE SUBUNIT B"/>
    <property type="match status" value="1"/>
</dbReference>
<dbReference type="PANTHER" id="PTHR43389:SF4">
    <property type="entry name" value="V-TYPE PROTON ATPASE SUBUNIT B"/>
    <property type="match status" value="1"/>
</dbReference>
<dbReference type="Pfam" id="PF00006">
    <property type="entry name" value="ATP-synt_ab"/>
    <property type="match status" value="1"/>
</dbReference>
<dbReference type="Pfam" id="PF02874">
    <property type="entry name" value="ATP-synt_ab_N"/>
    <property type="match status" value="1"/>
</dbReference>
<dbReference type="Pfam" id="PF22919">
    <property type="entry name" value="ATP-synt_VA_C"/>
    <property type="match status" value="1"/>
</dbReference>
<dbReference type="PIRSF" id="PIRSF039114">
    <property type="entry name" value="V-ATPsynth_beta/V-ATPase_B"/>
    <property type="match status" value="1"/>
</dbReference>
<dbReference type="SUPFAM" id="SSF47917">
    <property type="entry name" value="C-terminal domain of alpha and beta subunits of F1 ATP synthase"/>
    <property type="match status" value="1"/>
</dbReference>
<dbReference type="SUPFAM" id="SSF50615">
    <property type="entry name" value="N-terminal domain of alpha and beta subunits of F1 ATP synthase"/>
    <property type="match status" value="1"/>
</dbReference>
<dbReference type="SUPFAM" id="SSF52540">
    <property type="entry name" value="P-loop containing nucleoside triphosphate hydrolases"/>
    <property type="match status" value="1"/>
</dbReference>
<dbReference type="PROSITE" id="PS00152">
    <property type="entry name" value="ATPASE_ALPHA_BETA"/>
    <property type="match status" value="1"/>
</dbReference>
<keyword id="KW-0066">ATP synthesis</keyword>
<keyword id="KW-1003">Cell membrane</keyword>
<keyword id="KW-0375">Hydrogen ion transport</keyword>
<keyword id="KW-0406">Ion transport</keyword>
<keyword id="KW-0472">Membrane</keyword>
<keyword id="KW-1185">Reference proteome</keyword>
<keyword id="KW-0813">Transport</keyword>
<sequence length="463" mass="51665">MNVNIKTREYTTVTEVSGPLMIVEGVEGVAYSEIVEIETPTGEKRRGQVLEVREDLAVVQVFEGTSDLNTETTKIRFTGETAKIGVSLDMMGRIFDGTGKPIDGGPEIIPEKELDINGSPMNPAAREFPAEFIQTGISTIDGMNTLVRGQKLPIFSGSGLPHNELAAQIARQAKVLAEESEFAVIFAAMGITHEEANYFMRDFERTGALERVTVFMNLADDPAIERIITPRMALTTAEYFAFEHDMHVLVILTDLTNYCEALREISAAREEVPGRRGYPGYMYTDLASLYERAGRIVGKEGSITQMPILVMPQDDITHPIPDLTGYITEGQIVLSRDLHRKGIYPPVDVLPSLSRLMSGGIGEGRTREDHSGVSDQLYSAYAEGRDLRDLMAVVGEEALTERDRKFLKFADEFEKRFITQARDEDRSIEETLNLGWELLSLLPRSELKRVREEHIPKYLPGAE</sequence>
<comment type="function">
    <text evidence="1">Component of the A-type ATP synthase that produces ATP from ADP in the presence of a proton gradient across the membrane. The B chain is a regulatory subunit.</text>
</comment>
<comment type="subunit">
    <text evidence="1">Has multiple subunits with at least A(3), B(3), C, D, E, F, H, I and proteolipid K(x).</text>
</comment>
<comment type="subcellular location">
    <subcellularLocation>
        <location evidence="1">Cell membrane</location>
        <topology evidence="1">Peripheral membrane protein</topology>
    </subcellularLocation>
</comment>
<comment type="similarity">
    <text evidence="1">Belongs to the ATPase alpha/beta chains family.</text>
</comment>
<comment type="sequence caution" evidence="2">
    <conflict type="erroneous initiation">
        <sequence resource="EMBL-CDS" id="AAB85450"/>
    </conflict>
</comment>
<proteinExistence type="inferred from homology"/>
<organism>
    <name type="scientific">Methanothermobacter thermautotrophicus (strain ATCC 29096 / DSM 1053 / JCM 10044 / NBRC 100330 / Delta H)</name>
    <name type="common">Methanobacterium thermoautotrophicum</name>
    <dbReference type="NCBI Taxonomy" id="187420"/>
    <lineage>
        <taxon>Archaea</taxon>
        <taxon>Methanobacteriati</taxon>
        <taxon>Methanobacteriota</taxon>
        <taxon>Methanomada group</taxon>
        <taxon>Methanobacteria</taxon>
        <taxon>Methanobacteriales</taxon>
        <taxon>Methanobacteriaceae</taxon>
        <taxon>Methanothermobacter</taxon>
    </lineage>
</organism>